<keyword id="KW-0010">Activator</keyword>
<keyword id="KW-0963">Cytoplasm</keyword>
<keyword id="KW-0238">DNA-binding</keyword>
<keyword id="KW-0804">Transcription</keyword>
<keyword id="KW-0805">Transcription regulation</keyword>
<comment type="subunit">
    <text evidence="1">Homodimer.</text>
</comment>
<comment type="subcellular location">
    <subcellularLocation>
        <location>Cytoplasm</location>
    </subcellularLocation>
</comment>
<sequence length="65" mass="7305">MQGRVKWFNAEKGFGFIEREDGDDVFVHFSAIQQDGYKSLEEGQQVEFDIVDGARGPQAANVVKL</sequence>
<feature type="chain" id="PRO_0000100286" description="Cold shock-like protein CspC">
    <location>
        <begin position="1"/>
        <end position="65"/>
    </location>
</feature>
<feature type="domain" description="CSD">
    <location>
        <begin position="3"/>
        <end position="62"/>
    </location>
</feature>
<evidence type="ECO:0000305" key="1"/>
<accession>P62170</accession>
<accession>Q45098</accession>
<gene>
    <name type="primary">cspC</name>
</gene>
<dbReference type="EMBL" id="X93041">
    <property type="protein sequence ID" value="CAA63609.1"/>
    <property type="molecule type" value="Genomic_DNA"/>
</dbReference>
<dbReference type="RefSeq" id="WP_001990088.1">
    <property type="nucleotide sequence ID" value="NZ_WBPO01000024.1"/>
</dbReference>
<dbReference type="SMR" id="P62170"/>
<dbReference type="GeneID" id="93005930"/>
<dbReference type="eggNOG" id="COG1278">
    <property type="taxonomic scope" value="Bacteria"/>
</dbReference>
<dbReference type="OMA" id="EIEPGQN"/>
<dbReference type="OrthoDB" id="9805039at2"/>
<dbReference type="GO" id="GO:0005737">
    <property type="term" value="C:cytoplasm"/>
    <property type="evidence" value="ECO:0007669"/>
    <property type="project" value="UniProtKB-SubCell"/>
</dbReference>
<dbReference type="GO" id="GO:0003677">
    <property type="term" value="F:DNA binding"/>
    <property type="evidence" value="ECO:0007669"/>
    <property type="project" value="UniProtKB-KW"/>
</dbReference>
<dbReference type="CDD" id="cd04458">
    <property type="entry name" value="CSP_CDS"/>
    <property type="match status" value="1"/>
</dbReference>
<dbReference type="FunFam" id="2.40.50.140:FF:000006">
    <property type="entry name" value="Cold shock protein CspC"/>
    <property type="match status" value="1"/>
</dbReference>
<dbReference type="Gene3D" id="6.20.370.130">
    <property type="match status" value="1"/>
</dbReference>
<dbReference type="Gene3D" id="2.40.50.140">
    <property type="entry name" value="Nucleic acid-binding proteins"/>
    <property type="match status" value="1"/>
</dbReference>
<dbReference type="InterPro" id="IPR012156">
    <property type="entry name" value="Cold_shock_CspA"/>
</dbReference>
<dbReference type="InterPro" id="IPR050181">
    <property type="entry name" value="Cold_shock_domain"/>
</dbReference>
<dbReference type="InterPro" id="IPR011129">
    <property type="entry name" value="CSD"/>
</dbReference>
<dbReference type="InterPro" id="IPR019844">
    <property type="entry name" value="CSD_CS"/>
</dbReference>
<dbReference type="InterPro" id="IPR002059">
    <property type="entry name" value="CSP_DNA-bd"/>
</dbReference>
<dbReference type="InterPro" id="IPR012340">
    <property type="entry name" value="NA-bd_OB-fold"/>
</dbReference>
<dbReference type="PANTHER" id="PTHR11544">
    <property type="entry name" value="COLD SHOCK DOMAIN CONTAINING PROTEINS"/>
    <property type="match status" value="1"/>
</dbReference>
<dbReference type="Pfam" id="PF00313">
    <property type="entry name" value="CSD"/>
    <property type="match status" value="1"/>
</dbReference>
<dbReference type="PIRSF" id="PIRSF002599">
    <property type="entry name" value="Cold_shock_A"/>
    <property type="match status" value="1"/>
</dbReference>
<dbReference type="PRINTS" id="PR00050">
    <property type="entry name" value="COLDSHOCK"/>
</dbReference>
<dbReference type="SMART" id="SM00357">
    <property type="entry name" value="CSP"/>
    <property type="match status" value="1"/>
</dbReference>
<dbReference type="SUPFAM" id="SSF50249">
    <property type="entry name" value="Nucleic acid-binding proteins"/>
    <property type="match status" value="1"/>
</dbReference>
<dbReference type="PROSITE" id="PS00352">
    <property type="entry name" value="CSD_1"/>
    <property type="match status" value="1"/>
</dbReference>
<dbReference type="PROSITE" id="PS51857">
    <property type="entry name" value="CSD_2"/>
    <property type="match status" value="1"/>
</dbReference>
<protein>
    <recommendedName>
        <fullName>Cold shock-like protein CspC</fullName>
    </recommendedName>
</protein>
<name>CSPC_BACCE</name>
<reference key="1">
    <citation type="journal article" date="1996" name="J. Bacteriol.">
        <title>Identification and purification of a family of dimeric major cold shock protein homologs from the psychrotrophic Bacillus cereus WSBC 10201.</title>
        <authorList>
            <person name="Mayr B."/>
            <person name="Kaplan T."/>
            <person name="Lechner S."/>
            <person name="Scherer S."/>
        </authorList>
    </citation>
    <scope>NUCLEOTIDE SEQUENCE [GENOMIC DNA]</scope>
    <source>
        <strain>WSBC 10201</strain>
    </source>
</reference>
<organism>
    <name type="scientific">Bacillus cereus</name>
    <dbReference type="NCBI Taxonomy" id="1396"/>
    <lineage>
        <taxon>Bacteria</taxon>
        <taxon>Bacillati</taxon>
        <taxon>Bacillota</taxon>
        <taxon>Bacilli</taxon>
        <taxon>Bacillales</taxon>
        <taxon>Bacillaceae</taxon>
        <taxon>Bacillus</taxon>
        <taxon>Bacillus cereus group</taxon>
    </lineage>
</organism>
<proteinExistence type="predicted"/>